<comment type="function">
    <text evidence="1">An essential GTPase which binds GTP, GDP and possibly (p)ppGpp with moderate affinity, with high nucleotide exchange rates and a fairly low GTP hydrolysis rate. Plays a role in control of the cell cycle, stress response, ribosome biogenesis and in those bacteria that undergo differentiation, in morphogenesis control.</text>
</comment>
<comment type="cofactor">
    <cofactor evidence="1">
        <name>Mg(2+)</name>
        <dbReference type="ChEBI" id="CHEBI:18420"/>
    </cofactor>
</comment>
<comment type="subunit">
    <text evidence="1">Monomer.</text>
</comment>
<comment type="subcellular location">
    <subcellularLocation>
        <location evidence="1">Cytoplasm</location>
    </subcellularLocation>
</comment>
<comment type="similarity">
    <text evidence="1">Belongs to the TRAFAC class OBG-HflX-like GTPase superfamily. OBG GTPase family.</text>
</comment>
<accession>B2V968</accession>
<gene>
    <name evidence="1" type="primary">obg</name>
    <name type="ordered locus">SYO3AOP1_0863</name>
</gene>
<organism>
    <name type="scientific">Sulfurihydrogenibium sp. (strain YO3AOP1)</name>
    <dbReference type="NCBI Taxonomy" id="436114"/>
    <lineage>
        <taxon>Bacteria</taxon>
        <taxon>Pseudomonadati</taxon>
        <taxon>Aquificota</taxon>
        <taxon>Aquificia</taxon>
        <taxon>Aquificales</taxon>
        <taxon>Hydrogenothermaceae</taxon>
        <taxon>Sulfurihydrogenibium</taxon>
    </lineage>
</organism>
<sequence>MFIDKAKIYVKAGDGGNGCVAFLREKYVPFGGPAGGDGGKGGDIILIADSSLQTLMDFKYKRHYKAERGQHGQGGNKKGKDGEDLILKVPIGTVVKDAETGEIIADLVKKGQSVVVAKGGKGGRGNAAFKSPTNQAPMVAEKGELGEERWIELELKLLADVGIIGFPNAGKSTLISILSKARPKIADYPFTTLTPVLGVLQLDVNDYIVLADIPGLIEGASEGLGLGHEFLRHIERTKFLIHLIDVSDFRERDPIDAFNIINKELEKYSPDLIKKPQIVVANKIDALSDKSLLDNLEKYFSERGYPFVAVSLITRENIDKLINLIRETRDKMKKEEVNESVILGNA</sequence>
<evidence type="ECO:0000255" key="1">
    <source>
        <dbReference type="HAMAP-Rule" id="MF_01454"/>
    </source>
</evidence>
<evidence type="ECO:0000255" key="2">
    <source>
        <dbReference type="PROSITE-ProRule" id="PRU01231"/>
    </source>
</evidence>
<protein>
    <recommendedName>
        <fullName evidence="1">GTPase Obg</fullName>
        <ecNumber evidence="1">3.6.5.-</ecNumber>
    </recommendedName>
    <alternativeName>
        <fullName evidence="1">GTP-binding protein Obg</fullName>
    </alternativeName>
</protein>
<feature type="chain" id="PRO_0000386327" description="GTPase Obg">
    <location>
        <begin position="1"/>
        <end position="346"/>
    </location>
</feature>
<feature type="domain" description="Obg" evidence="2">
    <location>
        <begin position="1"/>
        <end position="158"/>
    </location>
</feature>
<feature type="domain" description="OBG-type G" evidence="1">
    <location>
        <begin position="159"/>
        <end position="330"/>
    </location>
</feature>
<feature type="binding site" evidence="1">
    <location>
        <begin position="165"/>
        <end position="172"/>
    </location>
    <ligand>
        <name>GTP</name>
        <dbReference type="ChEBI" id="CHEBI:37565"/>
    </ligand>
</feature>
<feature type="binding site" evidence="1">
    <location>
        <position position="172"/>
    </location>
    <ligand>
        <name>Mg(2+)</name>
        <dbReference type="ChEBI" id="CHEBI:18420"/>
    </ligand>
</feature>
<feature type="binding site" evidence="1">
    <location>
        <begin position="190"/>
        <end position="194"/>
    </location>
    <ligand>
        <name>GTP</name>
        <dbReference type="ChEBI" id="CHEBI:37565"/>
    </ligand>
</feature>
<feature type="binding site" evidence="1">
    <location>
        <position position="192"/>
    </location>
    <ligand>
        <name>Mg(2+)</name>
        <dbReference type="ChEBI" id="CHEBI:18420"/>
    </ligand>
</feature>
<feature type="binding site" evidence="1">
    <location>
        <begin position="212"/>
        <end position="215"/>
    </location>
    <ligand>
        <name>GTP</name>
        <dbReference type="ChEBI" id="CHEBI:37565"/>
    </ligand>
</feature>
<feature type="binding site" evidence="1">
    <location>
        <begin position="282"/>
        <end position="285"/>
    </location>
    <ligand>
        <name>GTP</name>
        <dbReference type="ChEBI" id="CHEBI:37565"/>
    </ligand>
</feature>
<feature type="binding site" evidence="1">
    <location>
        <begin position="311"/>
        <end position="313"/>
    </location>
    <ligand>
        <name>GTP</name>
        <dbReference type="ChEBI" id="CHEBI:37565"/>
    </ligand>
</feature>
<proteinExistence type="inferred from homology"/>
<keyword id="KW-0963">Cytoplasm</keyword>
<keyword id="KW-0342">GTP-binding</keyword>
<keyword id="KW-0378">Hydrolase</keyword>
<keyword id="KW-0460">Magnesium</keyword>
<keyword id="KW-0479">Metal-binding</keyword>
<keyword id="KW-0547">Nucleotide-binding</keyword>
<reference key="1">
    <citation type="journal article" date="2009" name="J. Bacteriol.">
        <title>Complete and draft genome sequences of six members of the Aquificales.</title>
        <authorList>
            <person name="Reysenbach A.-L."/>
            <person name="Hamamura N."/>
            <person name="Podar M."/>
            <person name="Griffiths E."/>
            <person name="Ferreira S."/>
            <person name="Hochstein R."/>
            <person name="Heidelberg J."/>
            <person name="Johnson J."/>
            <person name="Mead D."/>
            <person name="Pohorille A."/>
            <person name="Sarmiento M."/>
            <person name="Schweighofer K."/>
            <person name="Seshadri R."/>
            <person name="Voytek M.A."/>
        </authorList>
    </citation>
    <scope>NUCLEOTIDE SEQUENCE [LARGE SCALE GENOMIC DNA]</scope>
    <source>
        <strain>YO3AOP1</strain>
    </source>
</reference>
<dbReference type="EC" id="3.6.5.-" evidence="1"/>
<dbReference type="EMBL" id="CP001080">
    <property type="protein sequence ID" value="ACD66491.1"/>
    <property type="molecule type" value="Genomic_DNA"/>
</dbReference>
<dbReference type="RefSeq" id="WP_012459565.1">
    <property type="nucleotide sequence ID" value="NC_010730.1"/>
</dbReference>
<dbReference type="SMR" id="B2V968"/>
<dbReference type="STRING" id="436114.SYO3AOP1_0863"/>
<dbReference type="KEGG" id="sul:SYO3AOP1_0863"/>
<dbReference type="eggNOG" id="COG0536">
    <property type="taxonomic scope" value="Bacteria"/>
</dbReference>
<dbReference type="HOGENOM" id="CLU_011747_2_0_0"/>
<dbReference type="GO" id="GO:0005737">
    <property type="term" value="C:cytoplasm"/>
    <property type="evidence" value="ECO:0007669"/>
    <property type="project" value="UniProtKB-SubCell"/>
</dbReference>
<dbReference type="GO" id="GO:0005525">
    <property type="term" value="F:GTP binding"/>
    <property type="evidence" value="ECO:0007669"/>
    <property type="project" value="UniProtKB-UniRule"/>
</dbReference>
<dbReference type="GO" id="GO:0003924">
    <property type="term" value="F:GTPase activity"/>
    <property type="evidence" value="ECO:0007669"/>
    <property type="project" value="UniProtKB-UniRule"/>
</dbReference>
<dbReference type="GO" id="GO:0000287">
    <property type="term" value="F:magnesium ion binding"/>
    <property type="evidence" value="ECO:0007669"/>
    <property type="project" value="InterPro"/>
</dbReference>
<dbReference type="GO" id="GO:0042254">
    <property type="term" value="P:ribosome biogenesis"/>
    <property type="evidence" value="ECO:0007669"/>
    <property type="project" value="UniProtKB-UniRule"/>
</dbReference>
<dbReference type="CDD" id="cd01898">
    <property type="entry name" value="Obg"/>
    <property type="match status" value="1"/>
</dbReference>
<dbReference type="FunFam" id="2.70.210.12:FF:000001">
    <property type="entry name" value="GTPase Obg"/>
    <property type="match status" value="1"/>
</dbReference>
<dbReference type="Gene3D" id="2.70.210.12">
    <property type="entry name" value="GTP1/OBG domain"/>
    <property type="match status" value="1"/>
</dbReference>
<dbReference type="Gene3D" id="3.40.50.300">
    <property type="entry name" value="P-loop containing nucleotide triphosphate hydrolases"/>
    <property type="match status" value="1"/>
</dbReference>
<dbReference type="HAMAP" id="MF_01454">
    <property type="entry name" value="GTPase_Obg"/>
    <property type="match status" value="1"/>
</dbReference>
<dbReference type="InterPro" id="IPR031167">
    <property type="entry name" value="G_OBG"/>
</dbReference>
<dbReference type="InterPro" id="IPR006073">
    <property type="entry name" value="GTP-bd"/>
</dbReference>
<dbReference type="InterPro" id="IPR014100">
    <property type="entry name" value="GTP-bd_Obg/CgtA"/>
</dbReference>
<dbReference type="InterPro" id="IPR006074">
    <property type="entry name" value="GTP1-OBG_CS"/>
</dbReference>
<dbReference type="InterPro" id="IPR006169">
    <property type="entry name" value="GTP1_OBG_dom"/>
</dbReference>
<dbReference type="InterPro" id="IPR036726">
    <property type="entry name" value="GTP1_OBG_dom_sf"/>
</dbReference>
<dbReference type="InterPro" id="IPR045086">
    <property type="entry name" value="OBG_GTPase"/>
</dbReference>
<dbReference type="InterPro" id="IPR027417">
    <property type="entry name" value="P-loop_NTPase"/>
</dbReference>
<dbReference type="InterPro" id="IPR005225">
    <property type="entry name" value="Small_GTP-bd"/>
</dbReference>
<dbReference type="NCBIfam" id="TIGR02729">
    <property type="entry name" value="Obg_CgtA"/>
    <property type="match status" value="1"/>
</dbReference>
<dbReference type="NCBIfam" id="NF008954">
    <property type="entry name" value="PRK12296.1"/>
    <property type="match status" value="1"/>
</dbReference>
<dbReference type="NCBIfam" id="NF008955">
    <property type="entry name" value="PRK12297.1"/>
    <property type="match status" value="1"/>
</dbReference>
<dbReference type="NCBIfam" id="NF008956">
    <property type="entry name" value="PRK12299.1"/>
    <property type="match status" value="1"/>
</dbReference>
<dbReference type="NCBIfam" id="TIGR00231">
    <property type="entry name" value="small_GTP"/>
    <property type="match status" value="1"/>
</dbReference>
<dbReference type="PANTHER" id="PTHR11702">
    <property type="entry name" value="DEVELOPMENTALLY REGULATED GTP-BINDING PROTEIN-RELATED"/>
    <property type="match status" value="1"/>
</dbReference>
<dbReference type="PANTHER" id="PTHR11702:SF31">
    <property type="entry name" value="MITOCHONDRIAL RIBOSOME-ASSOCIATED GTPASE 2"/>
    <property type="match status" value="1"/>
</dbReference>
<dbReference type="Pfam" id="PF01018">
    <property type="entry name" value="GTP1_OBG"/>
    <property type="match status" value="1"/>
</dbReference>
<dbReference type="Pfam" id="PF01926">
    <property type="entry name" value="MMR_HSR1"/>
    <property type="match status" value="1"/>
</dbReference>
<dbReference type="PIRSF" id="PIRSF002401">
    <property type="entry name" value="GTP_bd_Obg/CgtA"/>
    <property type="match status" value="1"/>
</dbReference>
<dbReference type="PRINTS" id="PR00326">
    <property type="entry name" value="GTP1OBG"/>
</dbReference>
<dbReference type="SUPFAM" id="SSF82051">
    <property type="entry name" value="Obg GTP-binding protein N-terminal domain"/>
    <property type="match status" value="1"/>
</dbReference>
<dbReference type="SUPFAM" id="SSF52540">
    <property type="entry name" value="P-loop containing nucleoside triphosphate hydrolases"/>
    <property type="match status" value="1"/>
</dbReference>
<dbReference type="PROSITE" id="PS51710">
    <property type="entry name" value="G_OBG"/>
    <property type="match status" value="1"/>
</dbReference>
<dbReference type="PROSITE" id="PS00905">
    <property type="entry name" value="GTP1_OBG"/>
    <property type="match status" value="1"/>
</dbReference>
<dbReference type="PROSITE" id="PS51883">
    <property type="entry name" value="OBG"/>
    <property type="match status" value="1"/>
</dbReference>
<name>OBG_SULSY</name>